<feature type="chain" id="PRO_0000458557" description="Protein REPRESSOR OF VERNALIZATION 1">
    <location>
        <begin position="1"/>
        <end position="675"/>
    </location>
</feature>
<feature type="domain" description="BAH" evidence="1">
    <location>
        <begin position="157"/>
        <end position="275"/>
    </location>
</feature>
<feature type="domain" description="TFIIS central" evidence="2">
    <location>
        <begin position="372"/>
        <end position="518"/>
    </location>
</feature>
<feature type="region of interest" description="Disordered" evidence="4">
    <location>
        <begin position="1"/>
        <end position="143"/>
    </location>
</feature>
<feature type="region of interest" description="Disordered" evidence="4">
    <location>
        <begin position="300"/>
        <end position="349"/>
    </location>
</feature>
<feature type="region of interest" description="Disordered" evidence="4">
    <location>
        <begin position="493"/>
        <end position="512"/>
    </location>
</feature>
<feature type="region of interest" description="Disordered" evidence="4">
    <location>
        <begin position="587"/>
        <end position="675"/>
    </location>
</feature>
<feature type="short sequence motif" description="Nuclear localization signal" evidence="3">
    <location>
        <begin position="73"/>
        <end position="80"/>
    </location>
</feature>
<feature type="compositionally biased region" description="Low complexity" evidence="4">
    <location>
        <begin position="22"/>
        <end position="31"/>
    </location>
</feature>
<feature type="compositionally biased region" description="Acidic residues" evidence="4">
    <location>
        <begin position="48"/>
        <end position="70"/>
    </location>
</feature>
<feature type="compositionally biased region" description="Basic and acidic residues" evidence="4">
    <location>
        <begin position="71"/>
        <end position="86"/>
    </location>
</feature>
<feature type="compositionally biased region" description="Basic residues" evidence="4">
    <location>
        <begin position="87"/>
        <end position="96"/>
    </location>
</feature>
<feature type="compositionally biased region" description="Acidic residues" evidence="4">
    <location>
        <begin position="113"/>
        <end position="127"/>
    </location>
</feature>
<feature type="compositionally biased region" description="Basic and acidic residues" evidence="4">
    <location>
        <begin position="333"/>
        <end position="346"/>
    </location>
</feature>
<feature type="compositionally biased region" description="Basic and acidic residues" evidence="4">
    <location>
        <begin position="499"/>
        <end position="512"/>
    </location>
</feature>
<feature type="compositionally biased region" description="Basic and acidic residues" evidence="4">
    <location>
        <begin position="613"/>
        <end position="627"/>
    </location>
</feature>
<accession>I1HNB2</accession>
<name>RVR1_BRADI</name>
<reference key="1">
    <citation type="journal article" date="2010" name="Nature">
        <title>Genome sequencing and analysis of the model grass Brachypodium distachyon.</title>
        <authorList>
            <consortium name="International Brachypodium Initiative"/>
        </authorList>
    </citation>
    <scope>NUCLEOTIDE SEQUENCE [LARGE SCALE GENOMIC DNA]</scope>
    <source>
        <strain>cv. Bd21</strain>
    </source>
</reference>
<reference key="2">
    <citation type="submission" date="2017-06" db="EMBL/GenBank/DDBJ databases">
        <title>WGS assembly of Brachypodium distachyon.</title>
        <authorList>
            <consortium name="The International Brachypodium Initiative"/>
            <person name="Lucas S."/>
            <person name="Harmon-Smith M."/>
            <person name="Lail K."/>
            <person name="Tice H."/>
            <person name="Grimwood J."/>
            <person name="Bruce D."/>
            <person name="Barry K."/>
            <person name="Shu S."/>
            <person name="Lindquist E."/>
            <person name="Wang M."/>
            <person name="Pitluck S."/>
            <person name="Vogel J.P."/>
            <person name="Garvin D.F."/>
            <person name="Mockler T.C."/>
            <person name="Schmutz J."/>
            <person name="Rokhsar D."/>
            <person name="Bevan M.W."/>
        </authorList>
    </citation>
    <scope>GENOME REANNOTATION</scope>
    <source>
        <strain>cv. Bd21</strain>
    </source>
</reference>
<reference key="3">
    <citation type="journal article" date="2017" name="Proc. Natl. Acad. Sci. U.S.A.">
        <title>Establishment of a vernalization requirement in Brachypodium distachyon requires REPRESSOR OF VERNALIZATION1.</title>
        <authorList>
            <person name="Woods D.P."/>
            <person name="Ream T.S."/>
            <person name="Bouche F."/>
            <person name="Lee J."/>
            <person name="Thrower N."/>
            <person name="Wilkerson C."/>
            <person name="Amasino R.M."/>
        </authorList>
    </citation>
    <scope>FUNCTION</scope>
    <scope>DISRUPTION PHENOTYPE</scope>
    <scope>TISSUE SPECIFICITY</scope>
    <source>
        <strain>cv. Bd21-3</strain>
    </source>
</reference>
<comment type="function">
    <text evidence="5">Component of a grass-specific mechanism of vernalization, a process by which prolonged cold exposure provides competence to flower in daylengths longer than 12 hours (PubMed:28584114). Negative regulator of flowering required for vernalization establishment by repressing VRN1 before vernalization and in the fall season (PubMed:28584114).</text>
</comment>
<comment type="subcellular location">
    <subcellularLocation>
        <location evidence="2 3">Nucleus</location>
    </subcellularLocation>
</comment>
<comment type="tissue specificity">
    <text evidence="5">Expressed constitutively.</text>
</comment>
<comment type="disruption phenotype">
    <text evidence="5">Precocious accumulation of VRN1 associated with reduced levels of the repressive chromatin modification H3K27me3 at VRN1 locus (similar to vernalized cv. Bd21-3 plants), thus leading to vernalization mimick and VRN1-dependent rapid flowering without cold exposure in daylengths longer than 12 hours (PubMed:28584114). Global transcriptome equivalent to vernalized plants (PubMed:28584114).</text>
</comment>
<protein>
    <recommendedName>
        <fullName evidence="6">Protein REPRESSOR OF VERNALIZATION 1</fullName>
        <shortName evidence="6">BdRVR1</shortName>
    </recommendedName>
</protein>
<dbReference type="EMBL" id="CM000881">
    <property type="protein sequence ID" value="KQK08181.1"/>
    <property type="molecule type" value="Genomic_DNA"/>
</dbReference>
<dbReference type="RefSeq" id="XP_003569155.1">
    <property type="nucleotide sequence ID" value="XM_003569107.3"/>
</dbReference>
<dbReference type="SMR" id="I1HNB2"/>
<dbReference type="FunCoup" id="I1HNB2">
    <property type="interactions" value="1531"/>
</dbReference>
<dbReference type="STRING" id="15368.I1HNB2"/>
<dbReference type="EnsemblPlants" id="KQK08181">
    <property type="protein sequence ID" value="KQK08181"/>
    <property type="gene ID" value="BRADI_2g40147v3"/>
</dbReference>
<dbReference type="GeneID" id="100843157"/>
<dbReference type="Gramene" id="KQK08181">
    <property type="protein sequence ID" value="KQK08181"/>
    <property type="gene ID" value="BRADI_2g40147v3"/>
</dbReference>
<dbReference type="KEGG" id="bdi:100843157"/>
<dbReference type="eggNOG" id="KOG1886">
    <property type="taxonomic scope" value="Eukaryota"/>
</dbReference>
<dbReference type="HOGENOM" id="CLU_026265_2_0_1"/>
<dbReference type="OMA" id="TIDGPNS"/>
<dbReference type="OrthoDB" id="1922186at2759"/>
<dbReference type="Proteomes" id="UP000008810">
    <property type="component" value="Chromosome 2"/>
</dbReference>
<dbReference type="ExpressionAtlas" id="I1HNB2">
    <property type="expression patterns" value="baseline"/>
</dbReference>
<dbReference type="GO" id="GO:0005634">
    <property type="term" value="C:nucleus"/>
    <property type="evidence" value="ECO:0007669"/>
    <property type="project" value="UniProtKB-SubCell"/>
</dbReference>
<dbReference type="GO" id="GO:0003682">
    <property type="term" value="F:chromatin binding"/>
    <property type="evidence" value="ECO:0007669"/>
    <property type="project" value="InterPro"/>
</dbReference>
<dbReference type="GO" id="GO:0001217">
    <property type="term" value="F:DNA-binding transcription repressor activity"/>
    <property type="evidence" value="ECO:0007669"/>
    <property type="project" value="EnsemblPlants"/>
</dbReference>
<dbReference type="GO" id="GO:0061628">
    <property type="term" value="F:histone H3K27me3 reader activity"/>
    <property type="evidence" value="ECO:0007669"/>
    <property type="project" value="EnsemblPlants"/>
</dbReference>
<dbReference type="GO" id="GO:0006351">
    <property type="term" value="P:DNA-templated transcription"/>
    <property type="evidence" value="ECO:0007669"/>
    <property type="project" value="InterPro"/>
</dbReference>
<dbReference type="GO" id="GO:0045814">
    <property type="term" value="P:negative regulation of gene expression, epigenetic"/>
    <property type="evidence" value="ECO:0000315"/>
    <property type="project" value="UniProtKB"/>
</dbReference>
<dbReference type="GO" id="GO:0034244">
    <property type="term" value="P:negative regulation of transcription elongation by RNA polymerase II"/>
    <property type="evidence" value="ECO:0007669"/>
    <property type="project" value="EnsemblPlants"/>
</dbReference>
<dbReference type="GO" id="GO:0010220">
    <property type="term" value="P:positive regulation of vernalization response"/>
    <property type="evidence" value="ECO:0000315"/>
    <property type="project" value="UniProtKB"/>
</dbReference>
<dbReference type="GO" id="GO:2000028">
    <property type="term" value="P:regulation of photoperiodism, flowering"/>
    <property type="evidence" value="ECO:0000315"/>
    <property type="project" value="UniProtKB"/>
</dbReference>
<dbReference type="CDD" id="cd04713">
    <property type="entry name" value="BAH_plant_3"/>
    <property type="match status" value="1"/>
</dbReference>
<dbReference type="Gene3D" id="2.30.30.490">
    <property type="match status" value="1"/>
</dbReference>
<dbReference type="Gene3D" id="1.10.472.30">
    <property type="entry name" value="Transcription elongation factor S-II, central domain"/>
    <property type="match status" value="1"/>
</dbReference>
<dbReference type="InterPro" id="IPR001025">
    <property type="entry name" value="BAH_dom"/>
</dbReference>
<dbReference type="InterPro" id="IPR043151">
    <property type="entry name" value="BAH_sf"/>
</dbReference>
<dbReference type="InterPro" id="IPR003618">
    <property type="entry name" value="TFIIS_cen_dom"/>
</dbReference>
<dbReference type="InterPro" id="IPR036575">
    <property type="entry name" value="TFIIS_cen_dom_sf"/>
</dbReference>
<dbReference type="PANTHER" id="PTHR46871">
    <property type="entry name" value="BROMO-ADJACENT HOMOLOGY (BAH) DOMAIN-CONTAINING PROTEIN"/>
    <property type="match status" value="1"/>
</dbReference>
<dbReference type="PANTHER" id="PTHR46871:SF1">
    <property type="entry name" value="BROMO-ADJACENT HOMOLOGY (BAH) DOMAIN-CONTAINING PROTEIN"/>
    <property type="match status" value="1"/>
</dbReference>
<dbReference type="Pfam" id="PF01426">
    <property type="entry name" value="BAH"/>
    <property type="match status" value="1"/>
</dbReference>
<dbReference type="Pfam" id="PF07500">
    <property type="entry name" value="TFIIS_M"/>
    <property type="match status" value="1"/>
</dbReference>
<dbReference type="SMART" id="SM00439">
    <property type="entry name" value="BAH"/>
    <property type="match status" value="1"/>
</dbReference>
<dbReference type="SMART" id="SM00510">
    <property type="entry name" value="TFS2M"/>
    <property type="match status" value="1"/>
</dbReference>
<dbReference type="SUPFAM" id="SSF46942">
    <property type="entry name" value="Elongation factor TFIIS domain 2"/>
    <property type="match status" value="1"/>
</dbReference>
<dbReference type="PROSITE" id="PS51038">
    <property type="entry name" value="BAH"/>
    <property type="match status" value="1"/>
</dbReference>
<dbReference type="PROSITE" id="PS51321">
    <property type="entry name" value="TFIIS_CENTRAL"/>
    <property type="match status" value="1"/>
</dbReference>
<keyword id="KW-0539">Nucleus</keyword>
<keyword id="KW-1185">Reference proteome</keyword>
<gene>
    <name evidence="6" type="primary">RVR1</name>
    <name evidence="7" type="ORF">BRADI_2g40147v3</name>
</gene>
<proteinExistence type="evidence at transcript level"/>
<evidence type="ECO:0000255" key="1">
    <source>
        <dbReference type="PROSITE-ProRule" id="PRU00370"/>
    </source>
</evidence>
<evidence type="ECO:0000255" key="2">
    <source>
        <dbReference type="PROSITE-ProRule" id="PRU00651"/>
    </source>
</evidence>
<evidence type="ECO:0000255" key="3">
    <source>
        <dbReference type="PROSITE-ProRule" id="PRU00768"/>
    </source>
</evidence>
<evidence type="ECO:0000256" key="4">
    <source>
        <dbReference type="SAM" id="MobiDB-lite"/>
    </source>
</evidence>
<evidence type="ECO:0000269" key="5">
    <source>
    </source>
</evidence>
<evidence type="ECO:0000303" key="6">
    <source>
    </source>
</evidence>
<evidence type="ECO:0000312" key="7">
    <source>
        <dbReference type="EMBL" id="KQK08181.1"/>
    </source>
</evidence>
<sequence length="675" mass="76234">MGRRRRFTQQSTSDDDDDKAAAEPPKTAKPAVPSSSGAKKQPRRHADEEEDEDEEDELELEDEEDDEKDLEEMRRNEEEERREETRTRRRRGRKPKRAVEESDEEPEEKKAESDEEEEEEVREEDSTEAVPVGDPVKVTGKGKKQRKHYASFEYEGNTFELEDPVLLTPEQKNEKPYVAIIKDITEYDGSLSVTGQWFYRPEEADKKGGGNWTASDTRELFYSFHIDDVPAESVMHKCVVHFIPLNKKIPSRKEHPGFIVQKVYDTVAKKLWNLTDKDYEDNKQHEIDLLVKKTMDRIGELPDREPTDTPGDNTDQFPNKRGLRKRPMNPIDVSRDATGKSEHFVKPETPGSDNLKHYAILAKFKVLTTATYRDKWLDKLLDTIPLTSNEGAGAAHADPVSVAKISNNGSSALDTSSVDNENSYAPDVVVSIMASLEKSTYDSLGSDFQKYNQKMRKLEFNIKNSPVLRTRLMNKELDPPVLLTMSPAELKAGLTPAEKTSEPEESRRLQMTDARCERCTEKKVGISDIIHAGHGDRYQLECISCGHTWFSSRDAISSLTVDAPSTGGNVGTAPWATAKFDVLQKQLASPRDQPDNKPGTDALQKSTAPSMPKLEKQKSFTKPKPEEPSAPTLEKQISFTKSKLDEPFVPTTLIKQKSFPKPKSQEPSARSADHE</sequence>
<organism>
    <name type="scientific">Brachypodium distachyon</name>
    <name type="common">Purple false brome</name>
    <name type="synonym">Trachynia distachya</name>
    <dbReference type="NCBI Taxonomy" id="15368"/>
    <lineage>
        <taxon>Eukaryota</taxon>
        <taxon>Viridiplantae</taxon>
        <taxon>Streptophyta</taxon>
        <taxon>Embryophyta</taxon>
        <taxon>Tracheophyta</taxon>
        <taxon>Spermatophyta</taxon>
        <taxon>Magnoliopsida</taxon>
        <taxon>Liliopsida</taxon>
        <taxon>Poales</taxon>
        <taxon>Poaceae</taxon>
        <taxon>BOP clade</taxon>
        <taxon>Pooideae</taxon>
        <taxon>Stipodae</taxon>
        <taxon>Brachypodieae</taxon>
        <taxon>Brachypodium</taxon>
    </lineage>
</organism>